<gene>
    <name evidence="1" type="primary">pdxA</name>
    <name type="ordered locus">EcolC_3603</name>
</gene>
<dbReference type="EC" id="1.1.1.262" evidence="1"/>
<dbReference type="EMBL" id="CP000946">
    <property type="protein sequence ID" value="ACA79217.1"/>
    <property type="molecule type" value="Genomic_DNA"/>
</dbReference>
<dbReference type="RefSeq" id="WP_000241259.1">
    <property type="nucleotide sequence ID" value="NZ_MTFT01000035.1"/>
</dbReference>
<dbReference type="SMR" id="B1IRC4"/>
<dbReference type="KEGG" id="ecl:EcolC_3603"/>
<dbReference type="HOGENOM" id="CLU_040168_1_0_6"/>
<dbReference type="UniPathway" id="UPA00244">
    <property type="reaction ID" value="UER00312"/>
</dbReference>
<dbReference type="GO" id="GO:0005737">
    <property type="term" value="C:cytoplasm"/>
    <property type="evidence" value="ECO:0007669"/>
    <property type="project" value="UniProtKB-SubCell"/>
</dbReference>
<dbReference type="GO" id="GO:0050570">
    <property type="term" value="F:4-hydroxythreonine-4-phosphate dehydrogenase activity"/>
    <property type="evidence" value="ECO:0007669"/>
    <property type="project" value="UniProtKB-UniRule"/>
</dbReference>
<dbReference type="GO" id="GO:0050897">
    <property type="term" value="F:cobalt ion binding"/>
    <property type="evidence" value="ECO:0007669"/>
    <property type="project" value="UniProtKB-UniRule"/>
</dbReference>
<dbReference type="GO" id="GO:0000287">
    <property type="term" value="F:magnesium ion binding"/>
    <property type="evidence" value="ECO:0007669"/>
    <property type="project" value="UniProtKB-UniRule"/>
</dbReference>
<dbReference type="GO" id="GO:0051287">
    <property type="term" value="F:NAD binding"/>
    <property type="evidence" value="ECO:0007669"/>
    <property type="project" value="InterPro"/>
</dbReference>
<dbReference type="GO" id="GO:0008270">
    <property type="term" value="F:zinc ion binding"/>
    <property type="evidence" value="ECO:0007669"/>
    <property type="project" value="UniProtKB-UniRule"/>
</dbReference>
<dbReference type="GO" id="GO:0042823">
    <property type="term" value="P:pyridoxal phosphate biosynthetic process"/>
    <property type="evidence" value="ECO:0007669"/>
    <property type="project" value="UniProtKB-UniRule"/>
</dbReference>
<dbReference type="GO" id="GO:0008615">
    <property type="term" value="P:pyridoxine biosynthetic process"/>
    <property type="evidence" value="ECO:0007669"/>
    <property type="project" value="UniProtKB-UniRule"/>
</dbReference>
<dbReference type="FunFam" id="3.40.718.10:FF:000010">
    <property type="entry name" value="4-hydroxythreonine-4-phosphate dehydrogenase"/>
    <property type="match status" value="1"/>
</dbReference>
<dbReference type="Gene3D" id="3.40.718.10">
    <property type="entry name" value="Isopropylmalate Dehydrogenase"/>
    <property type="match status" value="1"/>
</dbReference>
<dbReference type="HAMAP" id="MF_00536">
    <property type="entry name" value="PdxA"/>
    <property type="match status" value="1"/>
</dbReference>
<dbReference type="InterPro" id="IPR037510">
    <property type="entry name" value="PdxA"/>
</dbReference>
<dbReference type="InterPro" id="IPR005255">
    <property type="entry name" value="PdxA_fam"/>
</dbReference>
<dbReference type="NCBIfam" id="TIGR00557">
    <property type="entry name" value="pdxA"/>
    <property type="match status" value="1"/>
</dbReference>
<dbReference type="PANTHER" id="PTHR30004">
    <property type="entry name" value="4-HYDROXYTHREONINE-4-PHOSPHATE DEHYDROGENASE"/>
    <property type="match status" value="1"/>
</dbReference>
<dbReference type="PANTHER" id="PTHR30004:SF5">
    <property type="entry name" value="4-HYDROXYTHREONINE-4-PHOSPHATE DEHYDROGENASE"/>
    <property type="match status" value="1"/>
</dbReference>
<dbReference type="Pfam" id="PF04166">
    <property type="entry name" value="PdxA"/>
    <property type="match status" value="1"/>
</dbReference>
<dbReference type="SUPFAM" id="SSF53659">
    <property type="entry name" value="Isocitrate/Isopropylmalate dehydrogenase-like"/>
    <property type="match status" value="1"/>
</dbReference>
<organism>
    <name type="scientific">Escherichia coli (strain ATCC 8739 / DSM 1576 / NBRC 3972 / NCIMB 8545 / WDCM 00012 / Crooks)</name>
    <dbReference type="NCBI Taxonomy" id="481805"/>
    <lineage>
        <taxon>Bacteria</taxon>
        <taxon>Pseudomonadati</taxon>
        <taxon>Pseudomonadota</taxon>
        <taxon>Gammaproteobacteria</taxon>
        <taxon>Enterobacterales</taxon>
        <taxon>Enterobacteriaceae</taxon>
        <taxon>Escherichia</taxon>
    </lineage>
</organism>
<proteinExistence type="inferred from homology"/>
<sequence>MVKTQRVVITPGEPAGIGPDLVVQLAQREWPVELVVCADATLLTDRAAMLGLPLTLRPYSPNSPAQPQTTGTLTLLPVALRESVTAGQLAIENGHYVVETLARACDGCLNGEFAALITGPVHKGVINDAGIPFTGHTEFFEERSQAKKVVMMLATEELRVALATTHLPLRDIADAITPALLHEVIAILHHDLRTKFGIAEPRILVCGLNPHAGEGGHMGTEEIDTIIPVLDELRAQGMKLNGPLPADTLFQPKYLDNADAVLAMYHDQGLPVLKYQGFGRGVNITLGLPFIRTSVDHGTALELAGRGEADVGSFITALNLAIKMIVNTQ</sequence>
<name>PDXA_ECOLC</name>
<reference key="1">
    <citation type="submission" date="2008-02" db="EMBL/GenBank/DDBJ databases">
        <title>Complete sequence of Escherichia coli C str. ATCC 8739.</title>
        <authorList>
            <person name="Copeland A."/>
            <person name="Lucas S."/>
            <person name="Lapidus A."/>
            <person name="Glavina del Rio T."/>
            <person name="Dalin E."/>
            <person name="Tice H."/>
            <person name="Bruce D."/>
            <person name="Goodwin L."/>
            <person name="Pitluck S."/>
            <person name="Kiss H."/>
            <person name="Brettin T."/>
            <person name="Detter J.C."/>
            <person name="Han C."/>
            <person name="Kuske C.R."/>
            <person name="Schmutz J."/>
            <person name="Larimer F."/>
            <person name="Land M."/>
            <person name="Hauser L."/>
            <person name="Kyrpides N."/>
            <person name="Mikhailova N."/>
            <person name="Ingram L."/>
            <person name="Richardson P."/>
        </authorList>
    </citation>
    <scope>NUCLEOTIDE SEQUENCE [LARGE SCALE GENOMIC DNA]</scope>
    <source>
        <strain>ATCC 8739 / DSM 1576 / NBRC 3972 / NCIMB 8545 / WDCM 00012 / Crooks</strain>
    </source>
</reference>
<comment type="function">
    <text evidence="1">Catalyzes the NAD(P)-dependent oxidation of 4-(phosphooxy)-L-threonine (HTP) into 2-amino-3-oxo-4-(phosphooxy)butyric acid which spontaneously decarboxylates to form 3-amino-2-oxopropyl phosphate (AHAP).</text>
</comment>
<comment type="catalytic activity">
    <reaction evidence="1">
        <text>4-(phosphooxy)-L-threonine + NAD(+) = 3-amino-2-oxopropyl phosphate + CO2 + NADH</text>
        <dbReference type="Rhea" id="RHEA:32275"/>
        <dbReference type="ChEBI" id="CHEBI:16526"/>
        <dbReference type="ChEBI" id="CHEBI:57279"/>
        <dbReference type="ChEBI" id="CHEBI:57540"/>
        <dbReference type="ChEBI" id="CHEBI:57945"/>
        <dbReference type="ChEBI" id="CHEBI:58452"/>
        <dbReference type="EC" id="1.1.1.262"/>
    </reaction>
</comment>
<comment type="cofactor">
    <cofactor evidence="1">
        <name>Zn(2+)</name>
        <dbReference type="ChEBI" id="CHEBI:29105"/>
    </cofactor>
    <cofactor evidence="1">
        <name>Mg(2+)</name>
        <dbReference type="ChEBI" id="CHEBI:18420"/>
    </cofactor>
    <cofactor evidence="1">
        <name>Co(2+)</name>
        <dbReference type="ChEBI" id="CHEBI:48828"/>
    </cofactor>
    <text evidence="1">Binds 1 divalent metal cation per subunit. Can use ions such as Zn(2+), Mg(2+) or Co(2+).</text>
</comment>
<comment type="pathway">
    <text evidence="1">Cofactor biosynthesis; pyridoxine 5'-phosphate biosynthesis; pyridoxine 5'-phosphate from D-erythrose 4-phosphate: step 4/5.</text>
</comment>
<comment type="subunit">
    <text evidence="1">Homodimer.</text>
</comment>
<comment type="subcellular location">
    <subcellularLocation>
        <location evidence="1">Cytoplasm</location>
    </subcellularLocation>
</comment>
<comment type="miscellaneous">
    <text evidence="1">The active site is located at the dimer interface.</text>
</comment>
<comment type="similarity">
    <text evidence="1">Belongs to the PdxA family.</text>
</comment>
<protein>
    <recommendedName>
        <fullName evidence="1">4-hydroxythreonine-4-phosphate dehydrogenase</fullName>
        <ecNumber evidence="1">1.1.1.262</ecNumber>
    </recommendedName>
    <alternativeName>
        <fullName evidence="1">4-(phosphohydroxy)-L-threonine dehydrogenase</fullName>
    </alternativeName>
</protein>
<feature type="chain" id="PRO_1000081866" description="4-hydroxythreonine-4-phosphate dehydrogenase">
    <location>
        <begin position="1"/>
        <end position="329"/>
    </location>
</feature>
<feature type="binding site" evidence="1">
    <location>
        <position position="136"/>
    </location>
    <ligand>
        <name>substrate</name>
    </ligand>
</feature>
<feature type="binding site" evidence="1">
    <location>
        <position position="137"/>
    </location>
    <ligand>
        <name>substrate</name>
    </ligand>
</feature>
<feature type="binding site" evidence="1">
    <location>
        <position position="166"/>
    </location>
    <ligand>
        <name>a divalent metal cation</name>
        <dbReference type="ChEBI" id="CHEBI:60240"/>
        <note>ligand shared between dimeric partners</note>
    </ligand>
</feature>
<feature type="binding site" evidence="1">
    <location>
        <position position="211"/>
    </location>
    <ligand>
        <name>a divalent metal cation</name>
        <dbReference type="ChEBI" id="CHEBI:60240"/>
        <note>ligand shared between dimeric partners</note>
    </ligand>
</feature>
<feature type="binding site" evidence="1">
    <location>
        <position position="266"/>
    </location>
    <ligand>
        <name>a divalent metal cation</name>
        <dbReference type="ChEBI" id="CHEBI:60240"/>
        <note>ligand shared between dimeric partners</note>
    </ligand>
</feature>
<feature type="binding site" evidence="1">
    <location>
        <position position="274"/>
    </location>
    <ligand>
        <name>substrate</name>
    </ligand>
</feature>
<feature type="binding site" evidence="1">
    <location>
        <position position="283"/>
    </location>
    <ligand>
        <name>substrate</name>
    </ligand>
</feature>
<feature type="binding site" evidence="1">
    <location>
        <position position="292"/>
    </location>
    <ligand>
        <name>substrate</name>
    </ligand>
</feature>
<accession>B1IRC4</accession>
<evidence type="ECO:0000255" key="1">
    <source>
        <dbReference type="HAMAP-Rule" id="MF_00536"/>
    </source>
</evidence>
<keyword id="KW-0170">Cobalt</keyword>
<keyword id="KW-0963">Cytoplasm</keyword>
<keyword id="KW-0460">Magnesium</keyword>
<keyword id="KW-0479">Metal-binding</keyword>
<keyword id="KW-0520">NAD</keyword>
<keyword id="KW-0521">NADP</keyword>
<keyword id="KW-0560">Oxidoreductase</keyword>
<keyword id="KW-0664">Pyridoxine biosynthesis</keyword>
<keyword id="KW-0862">Zinc</keyword>